<sequence length="130" mass="14517">VQPSLGKESAAMKFERQHMDSTVATSSSPTYCNQMMKRRNMTQGQCKPVNTFVHESLADVHAVCSQENVKCKNGKSNCYKSHSALHITDCRLKGNAKYPNCDYQTSQHQKHIIVACEGNPFVPVHFDATV</sequence>
<dbReference type="EC" id="4.6.1.18"/>
<dbReference type="EMBL" id="X62945">
    <property type="protein sequence ID" value="CAA44717.1"/>
    <property type="molecule type" value="Genomic_DNA"/>
</dbReference>
<dbReference type="PIR" id="S22808">
    <property type="entry name" value="S22808"/>
</dbReference>
<dbReference type="SMR" id="P24717"/>
<dbReference type="GlyCosmos" id="P24717">
    <property type="glycosylation" value="1 site, No reported glycans"/>
</dbReference>
<dbReference type="PaxDb" id="10029-XP_007612251.1"/>
<dbReference type="eggNOG" id="ENOG502SQ4K">
    <property type="taxonomic scope" value="Eukaryota"/>
</dbReference>
<dbReference type="Proteomes" id="UP000694386">
    <property type="component" value="Unplaced"/>
</dbReference>
<dbReference type="Proteomes" id="UP001108280">
    <property type="component" value="Unplaced"/>
</dbReference>
<dbReference type="GO" id="GO:0005576">
    <property type="term" value="C:extracellular region"/>
    <property type="evidence" value="ECO:0007669"/>
    <property type="project" value="UniProtKB-SubCell"/>
</dbReference>
<dbReference type="GO" id="GO:0016829">
    <property type="term" value="F:lyase activity"/>
    <property type="evidence" value="ECO:0007669"/>
    <property type="project" value="UniProtKB-KW"/>
</dbReference>
<dbReference type="GO" id="GO:0003676">
    <property type="term" value="F:nucleic acid binding"/>
    <property type="evidence" value="ECO:0007669"/>
    <property type="project" value="InterPro"/>
</dbReference>
<dbReference type="GO" id="GO:0004522">
    <property type="term" value="F:ribonuclease A activity"/>
    <property type="evidence" value="ECO:0007669"/>
    <property type="project" value="UniProtKB-EC"/>
</dbReference>
<dbReference type="GO" id="GO:0050830">
    <property type="term" value="P:defense response to Gram-positive bacterium"/>
    <property type="evidence" value="ECO:0007669"/>
    <property type="project" value="TreeGrafter"/>
</dbReference>
<dbReference type="CDD" id="cd06265">
    <property type="entry name" value="RNase_A_canonical"/>
    <property type="match status" value="1"/>
</dbReference>
<dbReference type="FunFam" id="3.10.130.10:FF:000001">
    <property type="entry name" value="Ribonuclease pancreatic"/>
    <property type="match status" value="1"/>
</dbReference>
<dbReference type="Gene3D" id="3.10.130.10">
    <property type="entry name" value="Ribonuclease A-like domain"/>
    <property type="match status" value="1"/>
</dbReference>
<dbReference type="InterPro" id="IPR001427">
    <property type="entry name" value="RNaseA"/>
</dbReference>
<dbReference type="InterPro" id="IPR036816">
    <property type="entry name" value="RNaseA-like_dom_sf"/>
</dbReference>
<dbReference type="InterPro" id="IPR023411">
    <property type="entry name" value="RNaseA_AS"/>
</dbReference>
<dbReference type="InterPro" id="IPR023412">
    <property type="entry name" value="RNaseA_domain"/>
</dbReference>
<dbReference type="PANTHER" id="PTHR11437">
    <property type="entry name" value="RIBONUCLEASE"/>
    <property type="match status" value="1"/>
</dbReference>
<dbReference type="PANTHER" id="PTHR11437:SF24">
    <property type="entry name" value="RIBONUCLEASE PANCREATIC"/>
    <property type="match status" value="1"/>
</dbReference>
<dbReference type="Pfam" id="PF00074">
    <property type="entry name" value="RnaseA"/>
    <property type="match status" value="1"/>
</dbReference>
<dbReference type="PRINTS" id="PR00794">
    <property type="entry name" value="RIBONUCLEASE"/>
</dbReference>
<dbReference type="SMART" id="SM00092">
    <property type="entry name" value="RNAse_Pc"/>
    <property type="match status" value="1"/>
</dbReference>
<dbReference type="SUPFAM" id="SSF54076">
    <property type="entry name" value="RNase A-like"/>
    <property type="match status" value="1"/>
</dbReference>
<dbReference type="PROSITE" id="PS00127">
    <property type="entry name" value="RNASE_PANCREATIC"/>
    <property type="match status" value="1"/>
</dbReference>
<feature type="signal peptide">
    <location>
        <begin position="1" status="less than"/>
        <end position="6"/>
    </location>
</feature>
<feature type="chain" id="PRO_0000030918" description="Ribonuclease pancreatic">
    <location>
        <begin position="7"/>
        <end position="130"/>
    </location>
</feature>
<feature type="active site" description="Proton acceptor" evidence="1">
    <location>
        <position position="18"/>
    </location>
</feature>
<feature type="active site" description="Proton donor" evidence="1">
    <location>
        <position position="125"/>
    </location>
</feature>
<feature type="binding site" evidence="1">
    <location>
        <position position="13"/>
    </location>
    <ligand>
        <name>substrate</name>
    </ligand>
</feature>
<feature type="binding site" evidence="1">
    <location>
        <position position="16"/>
    </location>
    <ligand>
        <name>substrate</name>
    </ligand>
</feature>
<feature type="binding site" evidence="1">
    <location>
        <begin position="47"/>
        <end position="51"/>
    </location>
    <ligand>
        <name>substrate</name>
    </ligand>
</feature>
<feature type="binding site" evidence="1">
    <location>
        <position position="72"/>
    </location>
    <ligand>
        <name>substrate</name>
    </ligand>
</feature>
<feature type="binding site" evidence="1">
    <location>
        <position position="91"/>
    </location>
    <ligand>
        <name>substrate</name>
    </ligand>
</feature>
<feature type="glycosylation site" description="N-linked (GlcNAc...) asparagine" evidence="2">
    <location>
        <position position="40"/>
    </location>
</feature>
<feature type="disulfide bond" evidence="1">
    <location>
        <begin position="32"/>
        <end position="90"/>
    </location>
</feature>
<feature type="disulfide bond" evidence="1">
    <location>
        <begin position="46"/>
        <end position="101"/>
    </location>
</feature>
<feature type="disulfide bond" evidence="1">
    <location>
        <begin position="64"/>
        <end position="116"/>
    </location>
</feature>
<feature type="disulfide bond" evidence="1">
    <location>
        <begin position="71"/>
        <end position="78"/>
    </location>
</feature>
<feature type="non-terminal residue">
    <location>
        <position position="1"/>
    </location>
</feature>
<organism>
    <name type="scientific">Cricetulus griseus</name>
    <name type="common">Chinese hamster</name>
    <name type="synonym">Cricetulus barabensis griseus</name>
    <dbReference type="NCBI Taxonomy" id="10029"/>
    <lineage>
        <taxon>Eukaryota</taxon>
        <taxon>Metazoa</taxon>
        <taxon>Chordata</taxon>
        <taxon>Craniata</taxon>
        <taxon>Vertebrata</taxon>
        <taxon>Euteleostomi</taxon>
        <taxon>Mammalia</taxon>
        <taxon>Eutheria</taxon>
        <taxon>Euarchontoglires</taxon>
        <taxon>Glires</taxon>
        <taxon>Rodentia</taxon>
        <taxon>Myomorpha</taxon>
        <taxon>Muroidea</taxon>
        <taxon>Cricetidae</taxon>
        <taxon>Cricetinae</taxon>
        <taxon>Cricetulus</taxon>
    </lineage>
</organism>
<evidence type="ECO:0000250" key="1"/>
<evidence type="ECO:0000305" key="2"/>
<keyword id="KW-1015">Disulfide bond</keyword>
<keyword id="KW-0255">Endonuclease</keyword>
<keyword id="KW-0325">Glycoprotein</keyword>
<keyword id="KW-0378">Hydrolase</keyword>
<keyword id="KW-0456">Lyase</keyword>
<keyword id="KW-0540">Nuclease</keyword>
<keyword id="KW-0964">Secreted</keyword>
<keyword id="KW-0732">Signal</keyword>
<proteinExistence type="evidence at transcript level"/>
<gene>
    <name type="primary">RNASE1</name>
    <name type="synonym">RNS1</name>
</gene>
<accession>P24717</accession>
<reference key="1">
    <citation type="journal article" date="1992" name="Nucleic Acids Res.">
        <title>The DNA sequences of the human and hamster secretory ribonucleases determined with the polymerase chain reaction (PCR).</title>
        <authorList>
            <person name="Haugg M."/>
            <person name="Schein C.H."/>
        </authorList>
    </citation>
    <scope>NUCLEOTIDE SEQUENCE [GENOMIC DNA]</scope>
    <source>
        <tissue>Ovary</tissue>
    </source>
</reference>
<comment type="function">
    <text evidence="1">Endonuclease that catalyzes the cleavage of RNA on the 3' side of pyrimidine nucleotides. Acts on single-stranded and double-stranded RNA (By similarity).</text>
</comment>
<comment type="catalytic activity">
    <reaction>
        <text>an [RNA] containing cytidine + H2O = an [RNA]-3'-cytidine-3'-phosphate + a 5'-hydroxy-ribonucleotide-3'-[RNA].</text>
        <dbReference type="EC" id="4.6.1.18"/>
    </reaction>
</comment>
<comment type="catalytic activity">
    <reaction>
        <text>an [RNA] containing uridine + H2O = an [RNA]-3'-uridine-3'-phosphate + a 5'-hydroxy-ribonucleotide-3'-[RNA].</text>
        <dbReference type="EC" id="4.6.1.18"/>
    </reaction>
</comment>
<comment type="subunit">
    <text evidence="1">Monomer. Interacts with and forms tight 1:1 complexes with RNH1. Dimerization of two such complexes may occur. Interaction with RNH1 inhibits this protein (By similarity).</text>
</comment>
<comment type="subcellular location">
    <subcellularLocation>
        <location>Secreted</location>
    </subcellularLocation>
</comment>
<comment type="tissue specificity">
    <text>Pancreas.</text>
</comment>
<comment type="similarity">
    <text evidence="2">Belongs to the pancreatic ribonuclease family.</text>
</comment>
<protein>
    <recommendedName>
        <fullName>Ribonuclease pancreatic</fullName>
        <ecNumber>4.6.1.18</ecNumber>
    </recommendedName>
    <alternativeName>
        <fullName>RNase 1</fullName>
    </alternativeName>
    <alternativeName>
        <fullName>RNase A</fullName>
    </alternativeName>
</protein>
<name>RNAS1_CRIGR</name>